<reference key="1">
    <citation type="submission" date="2008-10" db="EMBL/GenBank/DDBJ databases">
        <title>Genome sequence of Ureaplasma urealyticum serovar 10 ATCC-33699.</title>
        <authorList>
            <person name="Shrivastava S."/>
            <person name="Methe B.A."/>
            <person name="Glass J."/>
            <person name="White K."/>
            <person name="Duffy L.B."/>
        </authorList>
    </citation>
    <scope>NUCLEOTIDE SEQUENCE [LARGE SCALE GENOMIC DNA]</scope>
    <source>
        <strain>ATCC 33699 / Western</strain>
    </source>
</reference>
<protein>
    <recommendedName>
        <fullName evidence="1">2,3-bisphosphoglycerate-independent phosphoglycerate mutase</fullName>
        <shortName evidence="1">BPG-independent PGAM</shortName>
        <shortName evidence="1">Phosphoglyceromutase</shortName>
        <shortName evidence="1">iPGM</shortName>
        <ecNumber evidence="1">5.4.2.12</ecNumber>
    </recommendedName>
</protein>
<feature type="chain" id="PRO_1000135910" description="2,3-bisphosphoglycerate-independent phosphoglycerate mutase">
    <location>
        <begin position="1"/>
        <end position="502"/>
    </location>
</feature>
<feature type="active site" description="Phosphoserine intermediate" evidence="1">
    <location>
        <position position="63"/>
    </location>
</feature>
<feature type="binding site" evidence="1">
    <location>
        <position position="13"/>
    </location>
    <ligand>
        <name>Mn(2+)</name>
        <dbReference type="ChEBI" id="CHEBI:29035"/>
        <label>2</label>
    </ligand>
</feature>
<feature type="binding site" evidence="1">
    <location>
        <position position="63"/>
    </location>
    <ligand>
        <name>Mn(2+)</name>
        <dbReference type="ChEBI" id="CHEBI:29035"/>
        <label>2</label>
    </ligand>
</feature>
<feature type="binding site" evidence="1">
    <location>
        <position position="117"/>
    </location>
    <ligand>
        <name>substrate</name>
    </ligand>
</feature>
<feature type="binding site" evidence="1">
    <location>
        <begin position="146"/>
        <end position="147"/>
    </location>
    <ligand>
        <name>substrate</name>
    </ligand>
</feature>
<feature type="binding site" evidence="1">
    <location>
        <position position="177"/>
    </location>
    <ligand>
        <name>substrate</name>
    </ligand>
</feature>
<feature type="binding site" evidence="1">
    <location>
        <position position="183"/>
    </location>
    <ligand>
        <name>substrate</name>
    </ligand>
</feature>
<feature type="binding site" evidence="1">
    <location>
        <begin position="251"/>
        <end position="254"/>
    </location>
    <ligand>
        <name>substrate</name>
    </ligand>
</feature>
<feature type="binding site" evidence="1">
    <location>
        <position position="324"/>
    </location>
    <ligand>
        <name>substrate</name>
    </ligand>
</feature>
<feature type="binding site" evidence="1">
    <location>
        <position position="389"/>
    </location>
    <ligand>
        <name>Mn(2+)</name>
        <dbReference type="ChEBI" id="CHEBI:29035"/>
        <label>1</label>
    </ligand>
</feature>
<feature type="binding site" evidence="1">
    <location>
        <position position="393"/>
    </location>
    <ligand>
        <name>Mn(2+)</name>
        <dbReference type="ChEBI" id="CHEBI:29035"/>
        <label>1</label>
    </ligand>
</feature>
<feature type="binding site" evidence="1">
    <location>
        <position position="430"/>
    </location>
    <ligand>
        <name>Mn(2+)</name>
        <dbReference type="ChEBI" id="CHEBI:29035"/>
        <label>2</label>
    </ligand>
</feature>
<feature type="binding site" evidence="1">
    <location>
        <position position="431"/>
    </location>
    <ligand>
        <name>Mn(2+)</name>
        <dbReference type="ChEBI" id="CHEBI:29035"/>
        <label>2</label>
    </ligand>
</feature>
<feature type="binding site" evidence="1">
    <location>
        <position position="448"/>
    </location>
    <ligand>
        <name>Mn(2+)</name>
        <dbReference type="ChEBI" id="CHEBI:29035"/>
        <label>1</label>
    </ligand>
</feature>
<evidence type="ECO:0000255" key="1">
    <source>
        <dbReference type="HAMAP-Rule" id="MF_01038"/>
    </source>
</evidence>
<accession>B5ZAY8</accession>
<name>GPMI_UREU1</name>
<organism>
    <name type="scientific">Ureaplasma urealyticum serovar 10 (strain ATCC 33699 / Western)</name>
    <dbReference type="NCBI Taxonomy" id="565575"/>
    <lineage>
        <taxon>Bacteria</taxon>
        <taxon>Bacillati</taxon>
        <taxon>Mycoplasmatota</taxon>
        <taxon>Mycoplasmoidales</taxon>
        <taxon>Mycoplasmoidaceae</taxon>
        <taxon>Ureaplasma</taxon>
    </lineage>
</organism>
<sequence length="502" mass="57430">MSLNKKLALIIIDGLGIGKKDDTNAVYLANPKTLNYLIKNYPTLEISAAQQPIGLLENQAGNSEIGHLTIGAGRIILNDNANINSYTKRLDYESLVLNDINNEIVHVVGMYSNGLVHSNYEHIHWIIKELVKNNNQVVLHLISDGRDDYPYGFAQFIEQINALKTQYNVIIKSLSGRYFAMDRDQRWERTQKAFNTMFIKQDKICEQSLLEVAQSIANHYESDEFVEPIVFNNDEKYNLKPYQKVILTNYRSDRMRQLAHLLKPNRKFNYHNPFLIKDIHLITLVPFPDVDAITLFEKQNLNNTLGDVLNDHHIKQARVAETEKYGHISFFFDGGINKHYASKTQYLIPSQKVATYDLCPQMSASLITKTIIDHYFDHDVFIVNYANPDMVGHSGNMKQTIQAILSVDSEIQKLYDFFKKNNGVLMITGDHGNAETMIDANGQIITSHSINDVWFIITDNNIVFDQTQKFSLANIAPTILEYLNIKKPIEMAASSMIKKIHK</sequence>
<gene>
    <name evidence="1" type="primary">gpmI</name>
    <name type="ordered locus">UUR10_0173</name>
</gene>
<comment type="function">
    <text evidence="1">Catalyzes the interconversion of 2-phosphoglycerate and 3-phosphoglycerate.</text>
</comment>
<comment type="catalytic activity">
    <reaction evidence="1">
        <text>(2R)-2-phosphoglycerate = (2R)-3-phosphoglycerate</text>
        <dbReference type="Rhea" id="RHEA:15901"/>
        <dbReference type="ChEBI" id="CHEBI:58272"/>
        <dbReference type="ChEBI" id="CHEBI:58289"/>
        <dbReference type="EC" id="5.4.2.12"/>
    </reaction>
</comment>
<comment type="cofactor">
    <cofactor evidence="1">
        <name>Mn(2+)</name>
        <dbReference type="ChEBI" id="CHEBI:29035"/>
    </cofactor>
    <text evidence="1">Binds 2 manganese ions per subunit.</text>
</comment>
<comment type="pathway">
    <text evidence="1">Carbohydrate degradation; glycolysis; pyruvate from D-glyceraldehyde 3-phosphate: step 3/5.</text>
</comment>
<comment type="subunit">
    <text evidence="1">Monomer.</text>
</comment>
<comment type="similarity">
    <text evidence="1">Belongs to the BPG-independent phosphoglycerate mutase family.</text>
</comment>
<dbReference type="EC" id="5.4.2.12" evidence="1"/>
<dbReference type="EMBL" id="CP001184">
    <property type="protein sequence ID" value="ACI60305.1"/>
    <property type="molecule type" value="Genomic_DNA"/>
</dbReference>
<dbReference type="RefSeq" id="WP_004025622.1">
    <property type="nucleotide sequence ID" value="NC_011374.1"/>
</dbReference>
<dbReference type="SMR" id="B5ZAY8"/>
<dbReference type="STRING" id="565575.UUR10_0173"/>
<dbReference type="GeneID" id="93848654"/>
<dbReference type="KEGG" id="uue:UUR10_0173"/>
<dbReference type="eggNOG" id="COG0696">
    <property type="taxonomic scope" value="Bacteria"/>
</dbReference>
<dbReference type="HOGENOM" id="CLU_026099_2_0_14"/>
<dbReference type="OrthoDB" id="9800863at2"/>
<dbReference type="UniPathway" id="UPA00109">
    <property type="reaction ID" value="UER00186"/>
</dbReference>
<dbReference type="Proteomes" id="UP000002018">
    <property type="component" value="Chromosome"/>
</dbReference>
<dbReference type="GO" id="GO:0005829">
    <property type="term" value="C:cytosol"/>
    <property type="evidence" value="ECO:0007669"/>
    <property type="project" value="TreeGrafter"/>
</dbReference>
<dbReference type="GO" id="GO:0030145">
    <property type="term" value="F:manganese ion binding"/>
    <property type="evidence" value="ECO:0007669"/>
    <property type="project" value="UniProtKB-UniRule"/>
</dbReference>
<dbReference type="GO" id="GO:0004619">
    <property type="term" value="F:phosphoglycerate mutase activity"/>
    <property type="evidence" value="ECO:0007669"/>
    <property type="project" value="UniProtKB-EC"/>
</dbReference>
<dbReference type="GO" id="GO:0006007">
    <property type="term" value="P:glucose catabolic process"/>
    <property type="evidence" value="ECO:0007669"/>
    <property type="project" value="InterPro"/>
</dbReference>
<dbReference type="GO" id="GO:0006096">
    <property type="term" value="P:glycolytic process"/>
    <property type="evidence" value="ECO:0007669"/>
    <property type="project" value="UniProtKB-UniRule"/>
</dbReference>
<dbReference type="CDD" id="cd16010">
    <property type="entry name" value="iPGM"/>
    <property type="match status" value="1"/>
</dbReference>
<dbReference type="Gene3D" id="3.40.720.10">
    <property type="entry name" value="Alkaline Phosphatase, subunit A"/>
    <property type="match status" value="1"/>
</dbReference>
<dbReference type="Gene3D" id="3.40.1450.10">
    <property type="entry name" value="BPG-independent phosphoglycerate mutase, domain B"/>
    <property type="match status" value="1"/>
</dbReference>
<dbReference type="HAMAP" id="MF_01038">
    <property type="entry name" value="GpmI"/>
    <property type="match status" value="1"/>
</dbReference>
<dbReference type="InterPro" id="IPR017850">
    <property type="entry name" value="Alkaline_phosphatase_core_sf"/>
</dbReference>
<dbReference type="InterPro" id="IPR011258">
    <property type="entry name" value="BPG-indep_PGM_N"/>
</dbReference>
<dbReference type="InterPro" id="IPR006124">
    <property type="entry name" value="Metalloenzyme"/>
</dbReference>
<dbReference type="InterPro" id="IPR036646">
    <property type="entry name" value="PGAM_B_sf"/>
</dbReference>
<dbReference type="InterPro" id="IPR005995">
    <property type="entry name" value="Pgm_bpd_ind"/>
</dbReference>
<dbReference type="NCBIfam" id="TIGR01307">
    <property type="entry name" value="pgm_bpd_ind"/>
    <property type="match status" value="1"/>
</dbReference>
<dbReference type="PANTHER" id="PTHR31637">
    <property type="entry name" value="2,3-BISPHOSPHOGLYCERATE-INDEPENDENT PHOSPHOGLYCERATE MUTASE"/>
    <property type="match status" value="1"/>
</dbReference>
<dbReference type="PANTHER" id="PTHR31637:SF0">
    <property type="entry name" value="2,3-BISPHOSPHOGLYCERATE-INDEPENDENT PHOSPHOGLYCERATE MUTASE"/>
    <property type="match status" value="1"/>
</dbReference>
<dbReference type="Pfam" id="PF06415">
    <property type="entry name" value="iPGM_N"/>
    <property type="match status" value="1"/>
</dbReference>
<dbReference type="Pfam" id="PF01676">
    <property type="entry name" value="Metalloenzyme"/>
    <property type="match status" value="1"/>
</dbReference>
<dbReference type="PIRSF" id="PIRSF001492">
    <property type="entry name" value="IPGAM"/>
    <property type="match status" value="1"/>
</dbReference>
<dbReference type="SUPFAM" id="SSF64158">
    <property type="entry name" value="2,3-Bisphosphoglycerate-independent phosphoglycerate mutase, substrate-binding domain"/>
    <property type="match status" value="1"/>
</dbReference>
<dbReference type="SUPFAM" id="SSF53649">
    <property type="entry name" value="Alkaline phosphatase-like"/>
    <property type="match status" value="1"/>
</dbReference>
<keyword id="KW-0324">Glycolysis</keyword>
<keyword id="KW-0413">Isomerase</keyword>
<keyword id="KW-0464">Manganese</keyword>
<keyword id="KW-0479">Metal-binding</keyword>
<proteinExistence type="inferred from homology"/>